<name>RMT2_CRYNJ</name>
<comment type="function">
    <text evidence="1">S-adenosyl-L-methionine-dependent protein-arginine N-methyltransferase that methylates the delta-nitrogen atom of arginine residues to form N5-methylarginine (type IV) in target proteins. Monomethylates ribosomal protein L12.</text>
</comment>
<comment type="subunit">
    <text evidence="1">Monomer.</text>
</comment>
<comment type="subcellular location">
    <subcellularLocation>
        <location evidence="1">Cytoplasm</location>
    </subcellularLocation>
    <subcellularLocation>
        <location evidence="1">Nucleus</location>
    </subcellularLocation>
</comment>
<comment type="similarity">
    <text evidence="2">Belongs to the class I-like SAM-binding methyltransferase superfamily. RMT2 methyltransferase family.</text>
</comment>
<protein>
    <recommendedName>
        <fullName evidence="1">Protein arginine N-methyltransferase 2</fullName>
        <ecNumber evidence="1">2.1.1.-</ecNumber>
    </recommendedName>
    <alternativeName>
        <fullName evidence="1">Protein-arginine N5-methyltransferase</fullName>
    </alternativeName>
    <alternativeName>
        <fullName evidence="1">Type IV protein arginine N-methyltransferase</fullName>
        <shortName evidence="1">Type IV PRMT</shortName>
    </alternativeName>
</protein>
<dbReference type="EC" id="2.1.1.-" evidence="1"/>
<dbReference type="EMBL" id="AE017341">
    <property type="protein sequence ID" value="AAW40960.2"/>
    <property type="molecule type" value="Genomic_DNA"/>
</dbReference>
<dbReference type="RefSeq" id="XP_566779.1">
    <property type="nucleotide sequence ID" value="XM_566779.1"/>
</dbReference>
<dbReference type="SMR" id="P0CQ68"/>
<dbReference type="FunCoup" id="P0CQ68">
    <property type="interactions" value="307"/>
</dbReference>
<dbReference type="STRING" id="214684.P0CQ68"/>
<dbReference type="PaxDb" id="214684-P0CQ68"/>
<dbReference type="eggNOG" id="KOG1709">
    <property type="taxonomic scope" value="Eukaryota"/>
</dbReference>
<dbReference type="HOGENOM" id="CLU_033831_1_0_1"/>
<dbReference type="InParanoid" id="P0CQ68"/>
<dbReference type="Proteomes" id="UP000002149">
    <property type="component" value="Chromosome 1"/>
</dbReference>
<dbReference type="GO" id="GO:0005737">
    <property type="term" value="C:cytoplasm"/>
    <property type="evidence" value="ECO:0000318"/>
    <property type="project" value="GO_Central"/>
</dbReference>
<dbReference type="GO" id="GO:0005634">
    <property type="term" value="C:nucleus"/>
    <property type="evidence" value="ECO:0000318"/>
    <property type="project" value="GO_Central"/>
</dbReference>
<dbReference type="GO" id="GO:0019702">
    <property type="term" value="F:protein arginine N5-methyltransferase activity"/>
    <property type="evidence" value="ECO:0000318"/>
    <property type="project" value="GO_Central"/>
</dbReference>
<dbReference type="GO" id="GO:0032259">
    <property type="term" value="P:methylation"/>
    <property type="evidence" value="ECO:0007669"/>
    <property type="project" value="UniProtKB-KW"/>
</dbReference>
<dbReference type="FunFam" id="1.25.40.20:FF:000446">
    <property type="entry name" value="Arginine N-methyltransferase 2"/>
    <property type="match status" value="1"/>
</dbReference>
<dbReference type="FunFam" id="3.40.50.150:FF:000430">
    <property type="entry name" value="Arginine N-methyltransferase 2"/>
    <property type="match status" value="1"/>
</dbReference>
<dbReference type="Gene3D" id="1.25.40.20">
    <property type="entry name" value="Ankyrin repeat-containing domain"/>
    <property type="match status" value="1"/>
</dbReference>
<dbReference type="Gene3D" id="3.40.50.150">
    <property type="entry name" value="Vaccinia Virus protein VP39"/>
    <property type="match status" value="1"/>
</dbReference>
<dbReference type="InterPro" id="IPR002110">
    <property type="entry name" value="Ankyrin_rpt"/>
</dbReference>
<dbReference type="InterPro" id="IPR036770">
    <property type="entry name" value="Ankyrin_rpt-contain_sf"/>
</dbReference>
<dbReference type="InterPro" id="IPR017408">
    <property type="entry name" value="Arginine_N-MeTrfase_2"/>
</dbReference>
<dbReference type="InterPro" id="IPR051038">
    <property type="entry name" value="RMT2/GAMT_Mtase"/>
</dbReference>
<dbReference type="InterPro" id="IPR026480">
    <property type="entry name" value="RMT2_dom"/>
</dbReference>
<dbReference type="InterPro" id="IPR029063">
    <property type="entry name" value="SAM-dependent_MTases_sf"/>
</dbReference>
<dbReference type="PANTHER" id="PTHR32379">
    <property type="entry name" value="GUANIDINOACETATE N-METHYLTRANSFERASE"/>
    <property type="match status" value="1"/>
</dbReference>
<dbReference type="PANTHER" id="PTHR32379:SF1">
    <property type="entry name" value="GUANIDINOACETATE N-METHYLTRANSFERASE"/>
    <property type="match status" value="1"/>
</dbReference>
<dbReference type="Pfam" id="PF12796">
    <property type="entry name" value="Ank_2"/>
    <property type="match status" value="1"/>
</dbReference>
<dbReference type="PIRSF" id="PIRSF038148">
    <property type="entry name" value="Arginine_N-mtfrase-2"/>
    <property type="match status" value="1"/>
</dbReference>
<dbReference type="SUPFAM" id="SSF48403">
    <property type="entry name" value="Ankyrin repeat"/>
    <property type="match status" value="1"/>
</dbReference>
<dbReference type="SUPFAM" id="SSF53335">
    <property type="entry name" value="S-adenosyl-L-methionine-dependent methyltransferases"/>
    <property type="match status" value="1"/>
</dbReference>
<dbReference type="PROSITE" id="PS50297">
    <property type="entry name" value="ANK_REP_REGION"/>
    <property type="match status" value="1"/>
</dbReference>
<dbReference type="PROSITE" id="PS50088">
    <property type="entry name" value="ANK_REPEAT"/>
    <property type="match status" value="1"/>
</dbReference>
<dbReference type="PROSITE" id="PS51559">
    <property type="entry name" value="SAM_RMT2"/>
    <property type="match status" value="1"/>
</dbReference>
<feature type="chain" id="PRO_0000228973" description="Protein arginine N-methyltransferase 2">
    <location>
        <begin position="1"/>
        <end position="382"/>
    </location>
</feature>
<feature type="repeat" description="ANK 1">
    <location>
        <begin position="22"/>
        <end position="46"/>
    </location>
</feature>
<feature type="repeat" description="ANK 2">
    <location>
        <begin position="48"/>
        <end position="80"/>
    </location>
</feature>
<feature type="domain" description="RMT2" evidence="2">
    <location>
        <begin position="134"/>
        <end position="382"/>
    </location>
</feature>
<feature type="binding site" evidence="2">
    <location>
        <position position="143"/>
    </location>
    <ligand>
        <name>S-adenosyl-L-methionine</name>
        <dbReference type="ChEBI" id="CHEBI:59789"/>
    </ligand>
</feature>
<feature type="binding site" evidence="2">
    <location>
        <position position="177"/>
    </location>
    <ligand>
        <name>S-adenosyl-L-methionine</name>
        <dbReference type="ChEBI" id="CHEBI:59789"/>
    </ligand>
</feature>
<feature type="binding site" evidence="2">
    <location>
        <begin position="205"/>
        <end position="210"/>
    </location>
    <ligand>
        <name>S-adenosyl-L-methionine</name>
        <dbReference type="ChEBI" id="CHEBI:59789"/>
    </ligand>
</feature>
<feature type="binding site" evidence="2">
    <location>
        <begin position="228"/>
        <end position="230"/>
    </location>
    <ligand>
        <name>S-adenosyl-L-methionine</name>
        <dbReference type="ChEBI" id="CHEBI:59789"/>
    </ligand>
</feature>
<feature type="binding site" evidence="2">
    <location>
        <begin position="255"/>
        <end position="256"/>
    </location>
    <ligand>
        <name>S-adenosyl-L-methionine</name>
        <dbReference type="ChEBI" id="CHEBI:59789"/>
    </ligand>
</feature>
<feature type="binding site" evidence="2">
    <location>
        <position position="284"/>
    </location>
    <ligand>
        <name>S-adenosyl-L-methionine</name>
        <dbReference type="ChEBI" id="CHEBI:59789"/>
    </ligand>
</feature>
<accession>P0CQ68</accession>
<accession>Q55ZU0</accession>
<accession>Q5KP51</accession>
<evidence type="ECO:0000250" key="1">
    <source>
        <dbReference type="UniProtKB" id="Q03305"/>
    </source>
</evidence>
<evidence type="ECO:0000255" key="2">
    <source>
        <dbReference type="PROSITE-ProRule" id="PRU00892"/>
    </source>
</evidence>
<reference key="1">
    <citation type="journal article" date="2005" name="Science">
        <title>The genome of the basidiomycetous yeast and human pathogen Cryptococcus neoformans.</title>
        <authorList>
            <person name="Loftus B.J."/>
            <person name="Fung E."/>
            <person name="Roncaglia P."/>
            <person name="Rowley D."/>
            <person name="Amedeo P."/>
            <person name="Bruno D."/>
            <person name="Vamathevan J."/>
            <person name="Miranda M."/>
            <person name="Anderson I.J."/>
            <person name="Fraser J.A."/>
            <person name="Allen J.E."/>
            <person name="Bosdet I.E."/>
            <person name="Brent M.R."/>
            <person name="Chiu R."/>
            <person name="Doering T.L."/>
            <person name="Donlin M.J."/>
            <person name="D'Souza C.A."/>
            <person name="Fox D.S."/>
            <person name="Grinberg V."/>
            <person name="Fu J."/>
            <person name="Fukushima M."/>
            <person name="Haas B.J."/>
            <person name="Huang J.C."/>
            <person name="Janbon G."/>
            <person name="Jones S.J.M."/>
            <person name="Koo H.L."/>
            <person name="Krzywinski M.I."/>
            <person name="Kwon-Chung K.J."/>
            <person name="Lengeler K.B."/>
            <person name="Maiti R."/>
            <person name="Marra M.A."/>
            <person name="Marra R.E."/>
            <person name="Mathewson C.A."/>
            <person name="Mitchell T.G."/>
            <person name="Pertea M."/>
            <person name="Riggs F.R."/>
            <person name="Salzberg S.L."/>
            <person name="Schein J.E."/>
            <person name="Shvartsbeyn A."/>
            <person name="Shin H."/>
            <person name="Shumway M."/>
            <person name="Specht C.A."/>
            <person name="Suh B.B."/>
            <person name="Tenney A."/>
            <person name="Utterback T.R."/>
            <person name="Wickes B.L."/>
            <person name="Wortman J.R."/>
            <person name="Wye N.H."/>
            <person name="Kronstad J.W."/>
            <person name="Lodge J.K."/>
            <person name="Heitman J."/>
            <person name="Davis R.W."/>
            <person name="Fraser C.M."/>
            <person name="Hyman R.W."/>
        </authorList>
    </citation>
    <scope>NUCLEOTIDE SEQUENCE [LARGE SCALE GENOMIC DNA]</scope>
    <source>
        <strain>JEC21 / ATCC MYA-565</strain>
    </source>
</reference>
<proteinExistence type="inferred from homology"/>
<keyword id="KW-0040">ANK repeat</keyword>
<keyword id="KW-0963">Cytoplasm</keyword>
<keyword id="KW-0489">Methyltransferase</keyword>
<keyword id="KW-0539">Nucleus</keyword>
<keyword id="KW-1185">Reference proteome</keyword>
<keyword id="KW-0677">Repeat</keyword>
<keyword id="KW-0949">S-adenosyl-L-methionine</keyword>
<keyword id="KW-0808">Transferase</keyword>
<sequence length="382" mass="42421">MDMDSAHLDSSLLTLAFRLIKAAQTAAPSVLADLLAEGAPAWFQDDDLGWSCLHYAAERKEPECLEVLLQGGAVWNAVDKWGRTAGEICLSLGDEEGWSIIRNEGIRSEMLHHALSGTSSPDATNNIVLRAEDKTSAGDNLVFLKSKLTWDVGKDGKERVLDADGNGVMMGWEEPLMVEHVKRLTEEHPKAELGAEGMSILNVGFGLGIVDRLFQECDPKPSHHTIIEAHPQVLEYIHKKGVHLLPNVRILQGRWQDWLLDGEKVGDVLSGTPDGMGFDAIFVDTFAEGYEDLKAFFEVIPDILNADNGRFSFWNGLGATNPTIYAVSSSLAELHLEDVGLQVEWHDVLIPESMREEVWKGVRRRYWDLPGYRLPIAKMSLI</sequence>
<organism>
    <name type="scientific">Cryptococcus neoformans var. neoformans serotype D (strain JEC21 / ATCC MYA-565)</name>
    <name type="common">Filobasidiella neoformans</name>
    <dbReference type="NCBI Taxonomy" id="214684"/>
    <lineage>
        <taxon>Eukaryota</taxon>
        <taxon>Fungi</taxon>
        <taxon>Dikarya</taxon>
        <taxon>Basidiomycota</taxon>
        <taxon>Agaricomycotina</taxon>
        <taxon>Tremellomycetes</taxon>
        <taxon>Tremellales</taxon>
        <taxon>Cryptococcaceae</taxon>
        <taxon>Cryptococcus</taxon>
        <taxon>Cryptococcus neoformans species complex</taxon>
    </lineage>
</organism>
<gene>
    <name evidence="1" type="primary">RMT2</name>
    <name type="ordered locus">CNA04170</name>
</gene>